<dbReference type="EMBL" id="AF098522">
    <property type="protein sequence ID" value="AAF22494.1"/>
    <property type="molecule type" value="Genomic_DNA"/>
</dbReference>
<dbReference type="EMBL" id="CP000033">
    <property type="protein sequence ID" value="AAV42640.1"/>
    <property type="molecule type" value="Genomic_DNA"/>
</dbReference>
<dbReference type="RefSeq" id="WP_003546741.1">
    <property type="nucleotide sequence ID" value="NC_006814.3"/>
</dbReference>
<dbReference type="RefSeq" id="YP_193671.1">
    <property type="nucleotide sequence ID" value="NC_006814.3"/>
</dbReference>
<dbReference type="SMR" id="Q9RGY5"/>
<dbReference type="STRING" id="272621.LBA0774"/>
<dbReference type="GeneID" id="93290104"/>
<dbReference type="KEGG" id="lac:LBA0774"/>
<dbReference type="PATRIC" id="fig|272621.13.peg.736"/>
<dbReference type="eggNOG" id="COG0711">
    <property type="taxonomic scope" value="Bacteria"/>
</dbReference>
<dbReference type="HOGENOM" id="CLU_079215_4_2_9"/>
<dbReference type="OrthoDB" id="282095at2"/>
<dbReference type="BioCyc" id="LACI272621:G1G49-790-MONOMER"/>
<dbReference type="Proteomes" id="UP000006381">
    <property type="component" value="Chromosome"/>
</dbReference>
<dbReference type="GO" id="GO:0005886">
    <property type="term" value="C:plasma membrane"/>
    <property type="evidence" value="ECO:0007669"/>
    <property type="project" value="UniProtKB-SubCell"/>
</dbReference>
<dbReference type="GO" id="GO:0045259">
    <property type="term" value="C:proton-transporting ATP synthase complex"/>
    <property type="evidence" value="ECO:0007669"/>
    <property type="project" value="UniProtKB-KW"/>
</dbReference>
<dbReference type="GO" id="GO:0046933">
    <property type="term" value="F:proton-transporting ATP synthase activity, rotational mechanism"/>
    <property type="evidence" value="ECO:0007669"/>
    <property type="project" value="UniProtKB-UniRule"/>
</dbReference>
<dbReference type="GO" id="GO:0046961">
    <property type="term" value="F:proton-transporting ATPase activity, rotational mechanism"/>
    <property type="evidence" value="ECO:0007669"/>
    <property type="project" value="TreeGrafter"/>
</dbReference>
<dbReference type="CDD" id="cd06503">
    <property type="entry name" value="ATP-synt_Fo_b"/>
    <property type="match status" value="1"/>
</dbReference>
<dbReference type="HAMAP" id="MF_01398">
    <property type="entry name" value="ATP_synth_b_bprime"/>
    <property type="match status" value="1"/>
</dbReference>
<dbReference type="InterPro" id="IPR002146">
    <property type="entry name" value="ATP_synth_b/b'su_bac/chlpt"/>
</dbReference>
<dbReference type="InterPro" id="IPR005864">
    <property type="entry name" value="ATP_synth_F0_bsu_bac"/>
</dbReference>
<dbReference type="InterPro" id="IPR050059">
    <property type="entry name" value="ATP_synthase_B_chain"/>
</dbReference>
<dbReference type="NCBIfam" id="TIGR01144">
    <property type="entry name" value="ATP_synt_b"/>
    <property type="match status" value="1"/>
</dbReference>
<dbReference type="PANTHER" id="PTHR33445:SF1">
    <property type="entry name" value="ATP SYNTHASE SUBUNIT B"/>
    <property type="match status" value="1"/>
</dbReference>
<dbReference type="PANTHER" id="PTHR33445">
    <property type="entry name" value="ATP SYNTHASE SUBUNIT B', CHLOROPLASTIC"/>
    <property type="match status" value="1"/>
</dbReference>
<dbReference type="Pfam" id="PF00430">
    <property type="entry name" value="ATP-synt_B"/>
    <property type="match status" value="1"/>
</dbReference>
<comment type="function">
    <text evidence="1">F(1)F(0) ATP synthase produces ATP from ADP in the presence of a proton or sodium gradient. F-type ATPases consist of two structural domains, F(1) containing the extramembraneous catalytic core and F(0) containing the membrane proton channel, linked together by a central stalk and a peripheral stalk. During catalysis, ATP synthesis in the catalytic domain of F(1) is coupled via a rotary mechanism of the central stalk subunits to proton translocation.</text>
</comment>
<comment type="function">
    <text evidence="1">Component of the F(0) channel, it forms part of the peripheral stalk, linking F(1) to F(0).</text>
</comment>
<comment type="activity regulation">
    <text evidence="2">Increases 2-fold following exposure to low pH.</text>
</comment>
<comment type="subunit">
    <text evidence="1">F-type ATPases have 2 components, F(1) - the catalytic core - and F(0) - the membrane proton channel. F(1) has five subunits: alpha(3), beta(3), gamma(1), delta(1), epsilon(1). F(0) has three main subunits: a(1), b(2) and c(10-14). The alpha and beta chains form an alternating ring which encloses part of the gamma chain. F(1) is attached to F(0) by a central stalk formed by the gamma and epsilon chains, while a peripheral stalk is formed by the delta and b chains.</text>
</comment>
<comment type="subcellular location">
    <subcellularLocation>
        <location evidence="1">Cell membrane</location>
        <topology evidence="1">Single-pass membrane protein</topology>
    </subcellularLocation>
</comment>
<comment type="induction">
    <text evidence="2">By low pH.</text>
</comment>
<comment type="similarity">
    <text evidence="1">Belongs to the ATPase B chain family.</text>
</comment>
<evidence type="ECO:0000255" key="1">
    <source>
        <dbReference type="HAMAP-Rule" id="MF_01398"/>
    </source>
</evidence>
<evidence type="ECO:0000269" key="2">
    <source>
    </source>
</evidence>
<sequence length="169" mass="18589">MTIQTLFAASHHIYLGNAIWYLLCFAILMLLIKHYAWGPVSDMMEKRRQKIISDLDSAASDRKKAETLANEREAALKNSRQEATQILSDAKTNAQNTSKEIVASANEDAAAIRKKANEEAAKAKSDALDAARDQVADISVAIAEKVIAKNLSAEDQKDLVDQFIKGLDD</sequence>
<feature type="chain" id="PRO_0000368537" description="ATP synthase subunit b">
    <location>
        <begin position="1"/>
        <end position="169"/>
    </location>
</feature>
<feature type="transmembrane region" description="Helical" evidence="1">
    <location>
        <begin position="12"/>
        <end position="32"/>
    </location>
</feature>
<gene>
    <name evidence="1" type="primary">atpF</name>
    <name type="ordered locus">LBA0774</name>
</gene>
<protein>
    <recommendedName>
        <fullName evidence="1">ATP synthase subunit b</fullName>
    </recommendedName>
    <alternativeName>
        <fullName evidence="1">ATP synthase F(0) sector subunit b</fullName>
    </alternativeName>
    <alternativeName>
        <fullName evidence="1">ATPase subunit I</fullName>
    </alternativeName>
    <alternativeName>
        <fullName evidence="1">F-type ATPase subunit b</fullName>
        <shortName evidence="1">F-ATPase subunit b</shortName>
    </alternativeName>
</protein>
<proteinExistence type="evidence at transcript level"/>
<name>ATPF_LACAC</name>
<accession>Q9RGY5</accession>
<accession>Q5FKY4</accession>
<reference key="1">
    <citation type="journal article" date="1999" name="Mol. Microbiol.">
        <title>Identification of the pH-inducible, proton-translocating F1F0-ATPase (atpBEFHAGDC) operon of Lactobacillus acidophilus by differential display: gene structure, cloning and characterization.</title>
        <authorList>
            <person name="Kullen M.J."/>
            <person name="Klaenhammer T.R."/>
        </authorList>
    </citation>
    <scope>NUCLEOTIDE SEQUENCE [GENOMIC DNA]</scope>
    <scope>ACTIVITY REGULATION</scope>
    <scope>INDUCTION</scope>
    <scope>PROBABLE OPERON</scope>
    <source>
        <strain>ATCC 700396 / NCK56 / N2 / NCFM</strain>
    </source>
</reference>
<reference key="2">
    <citation type="journal article" date="2005" name="Proc. Natl. Acad. Sci. U.S.A.">
        <title>Complete genome sequence of the probiotic lactic acid bacterium Lactobacillus acidophilus NCFM.</title>
        <authorList>
            <person name="Altermann E."/>
            <person name="Russell W.M."/>
            <person name="Azcarate-Peril M.A."/>
            <person name="Barrangou R."/>
            <person name="Buck B.L."/>
            <person name="McAuliffe O."/>
            <person name="Souther N."/>
            <person name="Dobson A."/>
            <person name="Duong T."/>
            <person name="Callanan M."/>
            <person name="Lick S."/>
            <person name="Hamrick A."/>
            <person name="Cano R."/>
            <person name="Klaenhammer T.R."/>
        </authorList>
    </citation>
    <scope>NUCLEOTIDE SEQUENCE [LARGE SCALE GENOMIC DNA]</scope>
    <source>
        <strain>ATCC 700396 / NCK56 / N2 / NCFM</strain>
    </source>
</reference>
<keyword id="KW-0066">ATP synthesis</keyword>
<keyword id="KW-1003">Cell membrane</keyword>
<keyword id="KW-0138">CF(0)</keyword>
<keyword id="KW-0375">Hydrogen ion transport</keyword>
<keyword id="KW-0406">Ion transport</keyword>
<keyword id="KW-0472">Membrane</keyword>
<keyword id="KW-1185">Reference proteome</keyword>
<keyword id="KW-0812">Transmembrane</keyword>
<keyword id="KW-1133">Transmembrane helix</keyword>
<keyword id="KW-0813">Transport</keyword>
<organism>
    <name type="scientific">Lactobacillus acidophilus (strain ATCC 700396 / NCK56 / N2 / NCFM)</name>
    <dbReference type="NCBI Taxonomy" id="272621"/>
    <lineage>
        <taxon>Bacteria</taxon>
        <taxon>Bacillati</taxon>
        <taxon>Bacillota</taxon>
        <taxon>Bacilli</taxon>
        <taxon>Lactobacillales</taxon>
        <taxon>Lactobacillaceae</taxon>
        <taxon>Lactobacillus</taxon>
    </lineage>
</organism>